<accession>O23507</accession>
<accession>Q84W77</accession>
<accession>Q8LET7</accession>
<keyword id="KW-1003">Cell membrane</keyword>
<keyword id="KW-0325">Glycoprotein</keyword>
<keyword id="KW-0336">GPI-anchor</keyword>
<keyword id="KW-0378">Hydrolase</keyword>
<keyword id="KW-0449">Lipoprotein</keyword>
<keyword id="KW-0472">Membrane</keyword>
<keyword id="KW-0479">Metal-binding</keyword>
<keyword id="KW-0482">Metalloprotease</keyword>
<keyword id="KW-0645">Protease</keyword>
<keyword id="KW-1185">Reference proteome</keyword>
<keyword id="KW-0732">Signal</keyword>
<keyword id="KW-0862">Zinc</keyword>
<keyword id="KW-0865">Zymogen</keyword>
<dbReference type="EC" id="3.4.24.-" evidence="10"/>
<dbReference type="EMBL" id="Z97341">
    <property type="protein sequence ID" value="CAB10439.1"/>
    <property type="molecule type" value="Genomic_DNA"/>
</dbReference>
<dbReference type="EMBL" id="AL161544">
    <property type="protein sequence ID" value="CAB78706.1"/>
    <property type="molecule type" value="Genomic_DNA"/>
</dbReference>
<dbReference type="EMBL" id="CP002687">
    <property type="protein sequence ID" value="AEE83779.1"/>
    <property type="molecule type" value="Genomic_DNA"/>
</dbReference>
<dbReference type="EMBL" id="BT004141">
    <property type="protein sequence ID" value="AAO42162.1"/>
    <property type="molecule type" value="mRNA"/>
</dbReference>
<dbReference type="EMBL" id="AY085244">
    <property type="protein sequence ID" value="AAM62476.1"/>
    <property type="molecule type" value="mRNA"/>
</dbReference>
<dbReference type="PIR" id="E71433">
    <property type="entry name" value="E71433"/>
</dbReference>
<dbReference type="RefSeq" id="NP_193397.1">
    <property type="nucleotide sequence ID" value="NM_117765.4"/>
</dbReference>
<dbReference type="SMR" id="O23507"/>
<dbReference type="FunCoup" id="O23507">
    <property type="interactions" value="74"/>
</dbReference>
<dbReference type="STRING" id="3702.O23507"/>
<dbReference type="MEROPS" id="M10.A04"/>
<dbReference type="GlyCosmos" id="O23507">
    <property type="glycosylation" value="2 sites, No reported glycans"/>
</dbReference>
<dbReference type="GlyGen" id="O23507">
    <property type="glycosylation" value="2 sites"/>
</dbReference>
<dbReference type="PaxDb" id="3702-AT4G16640.1"/>
<dbReference type="ProteomicsDB" id="243264"/>
<dbReference type="EnsemblPlants" id="AT4G16640.1">
    <property type="protein sequence ID" value="AT4G16640.1"/>
    <property type="gene ID" value="AT4G16640"/>
</dbReference>
<dbReference type="GeneID" id="827365"/>
<dbReference type="Gramene" id="AT4G16640.1">
    <property type="protein sequence ID" value="AT4G16640.1"/>
    <property type="gene ID" value="AT4G16640"/>
</dbReference>
<dbReference type="KEGG" id="ath:AT4G16640"/>
<dbReference type="Araport" id="AT4G16640"/>
<dbReference type="TAIR" id="AT4G16640">
    <property type="gene designation" value="AT1-MMP"/>
</dbReference>
<dbReference type="eggNOG" id="KOG1565">
    <property type="taxonomic scope" value="Eukaryota"/>
</dbReference>
<dbReference type="HOGENOM" id="CLU_015489_4_0_1"/>
<dbReference type="InParanoid" id="O23507"/>
<dbReference type="OMA" id="YMAKPGR"/>
<dbReference type="PhylomeDB" id="O23507"/>
<dbReference type="PRO" id="PR:O23507"/>
<dbReference type="Proteomes" id="UP000006548">
    <property type="component" value="Chromosome 4"/>
</dbReference>
<dbReference type="ExpressionAtlas" id="O23507">
    <property type="expression patterns" value="baseline and differential"/>
</dbReference>
<dbReference type="GO" id="GO:0031012">
    <property type="term" value="C:extracellular matrix"/>
    <property type="evidence" value="ECO:0007669"/>
    <property type="project" value="InterPro"/>
</dbReference>
<dbReference type="GO" id="GO:0005886">
    <property type="term" value="C:plasma membrane"/>
    <property type="evidence" value="ECO:0007669"/>
    <property type="project" value="UniProtKB-SubCell"/>
</dbReference>
<dbReference type="GO" id="GO:0098552">
    <property type="term" value="C:side of membrane"/>
    <property type="evidence" value="ECO:0007669"/>
    <property type="project" value="UniProtKB-KW"/>
</dbReference>
<dbReference type="GO" id="GO:0004222">
    <property type="term" value="F:metalloendopeptidase activity"/>
    <property type="evidence" value="ECO:0000314"/>
    <property type="project" value="UniProtKB"/>
</dbReference>
<dbReference type="GO" id="GO:0008270">
    <property type="term" value="F:zinc ion binding"/>
    <property type="evidence" value="ECO:0007669"/>
    <property type="project" value="InterPro"/>
</dbReference>
<dbReference type="GO" id="GO:0006508">
    <property type="term" value="P:proteolysis"/>
    <property type="evidence" value="ECO:0007669"/>
    <property type="project" value="UniProtKB-KW"/>
</dbReference>
<dbReference type="CDD" id="cd04278">
    <property type="entry name" value="ZnMc_MMP"/>
    <property type="match status" value="1"/>
</dbReference>
<dbReference type="FunFam" id="3.40.390.10:FF:000018">
    <property type="entry name" value="Metalloendoproteinase 1"/>
    <property type="match status" value="1"/>
</dbReference>
<dbReference type="Gene3D" id="3.40.390.10">
    <property type="entry name" value="Collagenase (Catalytic Domain)"/>
    <property type="match status" value="1"/>
</dbReference>
<dbReference type="InterPro" id="IPR033739">
    <property type="entry name" value="M10A_MMP"/>
</dbReference>
<dbReference type="InterPro" id="IPR024079">
    <property type="entry name" value="MetalloPept_cat_dom_sf"/>
</dbReference>
<dbReference type="InterPro" id="IPR001818">
    <property type="entry name" value="Pept_M10_metallopeptidase"/>
</dbReference>
<dbReference type="InterPro" id="IPR021190">
    <property type="entry name" value="Pept_M10A"/>
</dbReference>
<dbReference type="InterPro" id="IPR006026">
    <property type="entry name" value="Peptidase_Metallo"/>
</dbReference>
<dbReference type="InterPro" id="IPR002477">
    <property type="entry name" value="Peptidoglycan-bd-like"/>
</dbReference>
<dbReference type="InterPro" id="IPR036365">
    <property type="entry name" value="PGBD-like_sf"/>
</dbReference>
<dbReference type="PANTHER" id="PTHR10201">
    <property type="entry name" value="MATRIX METALLOPROTEINASE"/>
    <property type="match status" value="1"/>
</dbReference>
<dbReference type="PANTHER" id="PTHR10201:SF274">
    <property type="entry name" value="METALLOENDOPROTEINASE 1-MMP"/>
    <property type="match status" value="1"/>
</dbReference>
<dbReference type="Pfam" id="PF00413">
    <property type="entry name" value="Peptidase_M10"/>
    <property type="match status" value="1"/>
</dbReference>
<dbReference type="Pfam" id="PF01471">
    <property type="entry name" value="PG_binding_1"/>
    <property type="match status" value="1"/>
</dbReference>
<dbReference type="PRINTS" id="PR00138">
    <property type="entry name" value="MATRIXIN"/>
</dbReference>
<dbReference type="SMART" id="SM00235">
    <property type="entry name" value="ZnMc"/>
    <property type="match status" value="1"/>
</dbReference>
<dbReference type="SUPFAM" id="SSF55486">
    <property type="entry name" value="Metalloproteases ('zincins'), catalytic domain"/>
    <property type="match status" value="1"/>
</dbReference>
<dbReference type="SUPFAM" id="SSF47090">
    <property type="entry name" value="PGBD-like"/>
    <property type="match status" value="1"/>
</dbReference>
<dbReference type="PROSITE" id="PS00142">
    <property type="entry name" value="ZINC_PROTEASE"/>
    <property type="match status" value="1"/>
</dbReference>
<evidence type="ECO:0000250" key="1"/>
<evidence type="ECO:0000250" key="2">
    <source>
        <dbReference type="UniProtKB" id="P03956"/>
    </source>
</evidence>
<evidence type="ECO:0000250" key="3">
    <source>
        <dbReference type="UniProtKB" id="P29136"/>
    </source>
</evidence>
<evidence type="ECO:0000255" key="4"/>
<evidence type="ECO:0000255" key="5">
    <source>
        <dbReference type="PROSITE-ProRule" id="PRU00498"/>
    </source>
</evidence>
<evidence type="ECO:0000255" key="6">
    <source>
        <dbReference type="PROSITE-ProRule" id="PRU10095"/>
    </source>
</evidence>
<evidence type="ECO:0000269" key="7">
    <source>
    </source>
</evidence>
<evidence type="ECO:0000269" key="8">
    <source>
    </source>
</evidence>
<evidence type="ECO:0000303" key="9">
    <source>
    </source>
</evidence>
<evidence type="ECO:0000305" key="10"/>
<evidence type="ECO:0000312" key="11">
    <source>
        <dbReference type="Araport" id="AT4G16640"/>
    </source>
</evidence>
<evidence type="ECO:0000312" key="12">
    <source>
        <dbReference type="EMBL" id="CAB10439.1"/>
    </source>
</evidence>
<evidence type="ECO:0000312" key="13">
    <source>
        <dbReference type="Proteomes" id="UP000006548"/>
    </source>
</evidence>
<reference key="1">
    <citation type="journal article" date="1998" name="Nature">
        <title>Analysis of 1.9 Mb of contiguous sequence from chromosome 4 of Arabidopsis thaliana.</title>
        <authorList>
            <person name="Bevan M."/>
            <person name="Bancroft I."/>
            <person name="Bent E."/>
            <person name="Love K."/>
            <person name="Goodman H.M."/>
            <person name="Dean C."/>
            <person name="Bergkamp R."/>
            <person name="Dirkse W."/>
            <person name="van Staveren M."/>
            <person name="Stiekema W."/>
            <person name="Drost L."/>
            <person name="Ridley P."/>
            <person name="Hudson S.-A."/>
            <person name="Patel K."/>
            <person name="Murphy G."/>
            <person name="Piffanelli P."/>
            <person name="Wedler H."/>
            <person name="Wedler E."/>
            <person name="Wambutt R."/>
            <person name="Weitzenegger T."/>
            <person name="Pohl T."/>
            <person name="Terryn N."/>
            <person name="Gielen J."/>
            <person name="Villarroel R."/>
            <person name="De Clercq R."/>
            <person name="van Montagu M."/>
            <person name="Lecharny A."/>
            <person name="Aubourg S."/>
            <person name="Gy I."/>
            <person name="Kreis M."/>
            <person name="Lao N."/>
            <person name="Kavanagh T."/>
            <person name="Hempel S."/>
            <person name="Kotter P."/>
            <person name="Entian K.-D."/>
            <person name="Rieger M."/>
            <person name="Schaefer M."/>
            <person name="Funk B."/>
            <person name="Mueller-Auer S."/>
            <person name="Silvey M."/>
            <person name="James R."/>
            <person name="Monfort A."/>
            <person name="Pons A."/>
            <person name="Puigdomenech P."/>
            <person name="Douka A."/>
            <person name="Voukelatou E."/>
            <person name="Milioni D."/>
            <person name="Hatzopoulos P."/>
            <person name="Piravandi E."/>
            <person name="Obermaier B."/>
            <person name="Hilbert H."/>
            <person name="Duesterhoeft A."/>
            <person name="Moores T."/>
            <person name="Jones J.D.G."/>
            <person name="Eneva T."/>
            <person name="Palme K."/>
            <person name="Benes V."/>
            <person name="Rechmann S."/>
            <person name="Ansorge W."/>
            <person name="Cooke R."/>
            <person name="Berger C."/>
            <person name="Delseny M."/>
            <person name="Voet M."/>
            <person name="Volckaert G."/>
            <person name="Mewes H.-W."/>
            <person name="Klosterman S."/>
            <person name="Schueller C."/>
            <person name="Chalwatzis N."/>
        </authorList>
    </citation>
    <scope>NUCLEOTIDE SEQUENCE [LARGE SCALE GENOMIC DNA]</scope>
    <source>
        <strain>cv. Columbia</strain>
    </source>
</reference>
<reference key="2">
    <citation type="journal article" date="1999" name="Nature">
        <title>Sequence and analysis of chromosome 4 of the plant Arabidopsis thaliana.</title>
        <authorList>
            <person name="Mayer K.F.X."/>
            <person name="Schueller C."/>
            <person name="Wambutt R."/>
            <person name="Murphy G."/>
            <person name="Volckaert G."/>
            <person name="Pohl T."/>
            <person name="Duesterhoeft A."/>
            <person name="Stiekema W."/>
            <person name="Entian K.-D."/>
            <person name="Terryn N."/>
            <person name="Harris B."/>
            <person name="Ansorge W."/>
            <person name="Brandt P."/>
            <person name="Grivell L.A."/>
            <person name="Rieger M."/>
            <person name="Weichselgartner M."/>
            <person name="de Simone V."/>
            <person name="Obermaier B."/>
            <person name="Mache R."/>
            <person name="Mueller M."/>
            <person name="Kreis M."/>
            <person name="Delseny M."/>
            <person name="Puigdomenech P."/>
            <person name="Watson M."/>
            <person name="Schmidtheini T."/>
            <person name="Reichert B."/>
            <person name="Portetelle D."/>
            <person name="Perez-Alonso M."/>
            <person name="Boutry M."/>
            <person name="Bancroft I."/>
            <person name="Vos P."/>
            <person name="Hoheisel J."/>
            <person name="Zimmermann W."/>
            <person name="Wedler H."/>
            <person name="Ridley P."/>
            <person name="Langham S.-A."/>
            <person name="McCullagh B."/>
            <person name="Bilham L."/>
            <person name="Robben J."/>
            <person name="van der Schueren J."/>
            <person name="Grymonprez B."/>
            <person name="Chuang Y.-J."/>
            <person name="Vandenbussche F."/>
            <person name="Braeken M."/>
            <person name="Weltjens I."/>
            <person name="Voet M."/>
            <person name="Bastiaens I."/>
            <person name="Aert R."/>
            <person name="Defoor E."/>
            <person name="Weitzenegger T."/>
            <person name="Bothe G."/>
            <person name="Ramsperger U."/>
            <person name="Hilbert H."/>
            <person name="Braun M."/>
            <person name="Holzer E."/>
            <person name="Brandt A."/>
            <person name="Peters S."/>
            <person name="van Staveren M."/>
            <person name="Dirkse W."/>
            <person name="Mooijman P."/>
            <person name="Klein Lankhorst R."/>
            <person name="Rose M."/>
            <person name="Hauf J."/>
            <person name="Koetter P."/>
            <person name="Berneiser S."/>
            <person name="Hempel S."/>
            <person name="Feldpausch M."/>
            <person name="Lamberth S."/>
            <person name="Van den Daele H."/>
            <person name="De Keyser A."/>
            <person name="Buysshaert C."/>
            <person name="Gielen J."/>
            <person name="Villarroel R."/>
            <person name="De Clercq R."/>
            <person name="van Montagu M."/>
            <person name="Rogers J."/>
            <person name="Cronin A."/>
            <person name="Quail M.A."/>
            <person name="Bray-Allen S."/>
            <person name="Clark L."/>
            <person name="Doggett J."/>
            <person name="Hall S."/>
            <person name="Kay M."/>
            <person name="Lennard N."/>
            <person name="McLay K."/>
            <person name="Mayes R."/>
            <person name="Pettett A."/>
            <person name="Rajandream M.A."/>
            <person name="Lyne M."/>
            <person name="Benes V."/>
            <person name="Rechmann S."/>
            <person name="Borkova D."/>
            <person name="Bloecker H."/>
            <person name="Scharfe M."/>
            <person name="Grimm M."/>
            <person name="Loehnert T.-H."/>
            <person name="Dose S."/>
            <person name="de Haan M."/>
            <person name="Maarse A.C."/>
            <person name="Schaefer M."/>
            <person name="Mueller-Auer S."/>
            <person name="Gabel C."/>
            <person name="Fuchs M."/>
            <person name="Fartmann B."/>
            <person name="Granderath K."/>
            <person name="Dauner D."/>
            <person name="Herzl A."/>
            <person name="Neumann S."/>
            <person name="Argiriou A."/>
            <person name="Vitale D."/>
            <person name="Liguori R."/>
            <person name="Piravandi E."/>
            <person name="Massenet O."/>
            <person name="Quigley F."/>
            <person name="Clabauld G."/>
            <person name="Muendlein A."/>
            <person name="Felber R."/>
            <person name="Schnabl S."/>
            <person name="Hiller R."/>
            <person name="Schmidt W."/>
            <person name="Lecharny A."/>
            <person name="Aubourg S."/>
            <person name="Chefdor F."/>
            <person name="Cooke R."/>
            <person name="Berger C."/>
            <person name="Monfort A."/>
            <person name="Casacuberta E."/>
            <person name="Gibbons T."/>
            <person name="Weber N."/>
            <person name="Vandenbol M."/>
            <person name="Bargues M."/>
            <person name="Terol J."/>
            <person name="Torres A."/>
            <person name="Perez-Perez A."/>
            <person name="Purnelle B."/>
            <person name="Bent E."/>
            <person name="Johnson S."/>
            <person name="Tacon D."/>
            <person name="Jesse T."/>
            <person name="Heijnen L."/>
            <person name="Schwarz S."/>
            <person name="Scholler P."/>
            <person name="Heber S."/>
            <person name="Francs P."/>
            <person name="Bielke C."/>
            <person name="Frishman D."/>
            <person name="Haase D."/>
            <person name="Lemcke K."/>
            <person name="Mewes H.-W."/>
            <person name="Stocker S."/>
            <person name="Zaccaria P."/>
            <person name="Bevan M."/>
            <person name="Wilson R.K."/>
            <person name="de la Bastide M."/>
            <person name="Habermann K."/>
            <person name="Parnell L."/>
            <person name="Dedhia N."/>
            <person name="Gnoj L."/>
            <person name="Schutz K."/>
            <person name="Huang E."/>
            <person name="Spiegel L."/>
            <person name="Sekhon M."/>
            <person name="Murray J."/>
            <person name="Sheet P."/>
            <person name="Cordes M."/>
            <person name="Abu-Threideh J."/>
            <person name="Stoneking T."/>
            <person name="Kalicki J."/>
            <person name="Graves T."/>
            <person name="Harmon G."/>
            <person name="Edwards J."/>
            <person name="Latreille P."/>
            <person name="Courtney L."/>
            <person name="Cloud J."/>
            <person name="Abbott A."/>
            <person name="Scott K."/>
            <person name="Johnson D."/>
            <person name="Minx P."/>
            <person name="Bentley D."/>
            <person name="Fulton B."/>
            <person name="Miller N."/>
            <person name="Greco T."/>
            <person name="Kemp K."/>
            <person name="Kramer J."/>
            <person name="Fulton L."/>
            <person name="Mardis E."/>
            <person name="Dante M."/>
            <person name="Pepin K."/>
            <person name="Hillier L.W."/>
            <person name="Nelson J."/>
            <person name="Spieth J."/>
            <person name="Ryan E."/>
            <person name="Andrews S."/>
            <person name="Geisel C."/>
            <person name="Layman D."/>
            <person name="Du H."/>
            <person name="Ali J."/>
            <person name="Berghoff A."/>
            <person name="Jones K."/>
            <person name="Drone K."/>
            <person name="Cotton M."/>
            <person name="Joshu C."/>
            <person name="Antonoiu B."/>
            <person name="Zidanic M."/>
            <person name="Strong C."/>
            <person name="Sun H."/>
            <person name="Lamar B."/>
            <person name="Yordan C."/>
            <person name="Ma P."/>
            <person name="Zhong J."/>
            <person name="Preston R."/>
            <person name="Vil D."/>
            <person name="Shekher M."/>
            <person name="Matero A."/>
            <person name="Shah R."/>
            <person name="Swaby I.K."/>
            <person name="O'Shaughnessy A."/>
            <person name="Rodriguez M."/>
            <person name="Hoffman J."/>
            <person name="Till S."/>
            <person name="Granat S."/>
            <person name="Shohdy N."/>
            <person name="Hasegawa A."/>
            <person name="Hameed A."/>
            <person name="Lodhi M."/>
            <person name="Johnson A."/>
            <person name="Chen E."/>
            <person name="Marra M.A."/>
            <person name="Martienssen R."/>
            <person name="McCombie W.R."/>
        </authorList>
    </citation>
    <scope>NUCLEOTIDE SEQUENCE [LARGE SCALE GENOMIC DNA]</scope>
    <source>
        <strain>cv. Columbia</strain>
    </source>
</reference>
<reference key="3">
    <citation type="journal article" date="2017" name="Plant J.">
        <title>Araport11: a complete reannotation of the Arabidopsis thaliana reference genome.</title>
        <authorList>
            <person name="Cheng C.Y."/>
            <person name="Krishnakumar V."/>
            <person name="Chan A.P."/>
            <person name="Thibaud-Nissen F."/>
            <person name="Schobel S."/>
            <person name="Town C.D."/>
        </authorList>
    </citation>
    <scope>GENOME REANNOTATION</scope>
    <source>
        <strain>cv. Columbia</strain>
    </source>
</reference>
<reference key="4">
    <citation type="journal article" date="2003" name="Science">
        <title>Empirical analysis of transcriptional activity in the Arabidopsis genome.</title>
        <authorList>
            <person name="Yamada K."/>
            <person name="Lim J."/>
            <person name="Dale J.M."/>
            <person name="Chen H."/>
            <person name="Shinn P."/>
            <person name="Palm C.J."/>
            <person name="Southwick A.M."/>
            <person name="Wu H.C."/>
            <person name="Kim C.J."/>
            <person name="Nguyen M."/>
            <person name="Pham P.K."/>
            <person name="Cheuk R.F."/>
            <person name="Karlin-Newmann G."/>
            <person name="Liu S.X."/>
            <person name="Lam B."/>
            <person name="Sakano H."/>
            <person name="Wu T."/>
            <person name="Yu G."/>
            <person name="Miranda M."/>
            <person name="Quach H.L."/>
            <person name="Tripp M."/>
            <person name="Chang C.H."/>
            <person name="Lee J.M."/>
            <person name="Toriumi M.J."/>
            <person name="Chan M.M."/>
            <person name="Tang C.C."/>
            <person name="Onodera C.S."/>
            <person name="Deng J.M."/>
            <person name="Akiyama K."/>
            <person name="Ansari Y."/>
            <person name="Arakawa T."/>
            <person name="Banh J."/>
            <person name="Banno F."/>
            <person name="Bowser L."/>
            <person name="Brooks S.Y."/>
            <person name="Carninci P."/>
            <person name="Chao Q."/>
            <person name="Choy N."/>
            <person name="Enju A."/>
            <person name="Goldsmith A.D."/>
            <person name="Gurjal M."/>
            <person name="Hansen N.F."/>
            <person name="Hayashizaki Y."/>
            <person name="Johnson-Hopson C."/>
            <person name="Hsuan V.W."/>
            <person name="Iida K."/>
            <person name="Karnes M."/>
            <person name="Khan S."/>
            <person name="Koesema E."/>
            <person name="Ishida J."/>
            <person name="Jiang P.X."/>
            <person name="Jones T."/>
            <person name="Kawai J."/>
            <person name="Kamiya A."/>
            <person name="Meyers C."/>
            <person name="Nakajima M."/>
            <person name="Narusaka M."/>
            <person name="Seki M."/>
            <person name="Sakurai T."/>
            <person name="Satou M."/>
            <person name="Tamse R."/>
            <person name="Vaysberg M."/>
            <person name="Wallender E.K."/>
            <person name="Wong C."/>
            <person name="Yamamura Y."/>
            <person name="Yuan S."/>
            <person name="Shinozaki K."/>
            <person name="Davis R.W."/>
            <person name="Theologis A."/>
            <person name="Ecker J.R."/>
        </authorList>
    </citation>
    <scope>NUCLEOTIDE SEQUENCE [LARGE SCALE MRNA]</scope>
    <source>
        <strain>cv. Columbia</strain>
    </source>
</reference>
<reference key="5">
    <citation type="submission" date="2002-03" db="EMBL/GenBank/DDBJ databases">
        <title>Full-length cDNA from Arabidopsis thaliana.</title>
        <authorList>
            <person name="Brover V.V."/>
            <person name="Troukhan M.E."/>
            <person name="Alexandrov N.A."/>
            <person name="Lu Y.-P."/>
            <person name="Flavell R.B."/>
            <person name="Feldmann K.A."/>
        </authorList>
    </citation>
    <scope>NUCLEOTIDE SEQUENCE [LARGE SCALE MRNA]</scope>
</reference>
<reference key="6">
    <citation type="journal article" date="1999" name="J. Biol. Chem.">
        <title>Matrix metalloproteinase homologues from Arabidopsis thaliana. Expression and activity.</title>
        <authorList>
            <person name="Maidment J.M."/>
            <person name="Moore D."/>
            <person name="Murphy G.P."/>
            <person name="Murphy G."/>
            <person name="Clark I.M."/>
        </authorList>
    </citation>
    <scope>FUNCTION</scope>
    <scope>ACTIVITY REGULATION</scope>
    <scope>TISSUE SPECIFICITY</scope>
    <scope>GENE FAMILY</scope>
    <scope>NOMENCLATURE</scope>
</reference>
<reference key="7">
    <citation type="journal article" date="2014" name="Biochem. J.">
        <title>Family-wide characterization of matrix metalloproteinases from Arabidopsis thaliana reveals their distinct proteolytic activity and cleavage site specificity.</title>
        <authorList>
            <person name="Marino G."/>
            <person name="Huesgen P.F."/>
            <person name="Eckhard U."/>
            <person name="Overall C.M."/>
            <person name="Schroeder W.P."/>
            <person name="Funk C."/>
        </authorList>
    </citation>
    <scope>FUNCTION</scope>
    <scope>BIOPHYSICOCHEMICAL PROPERTIES</scope>
    <scope>ACTIVITY REGULATION</scope>
    <scope>GENE FAMILY</scope>
    <source>
        <strain>cv. Columbia</strain>
    </source>
</reference>
<protein>
    <recommendedName>
        <fullName evidence="9">Metalloendoproteinase 1-MMP</fullName>
        <shortName evidence="9">At1-MMP</shortName>
        <ecNumber evidence="10">3.4.24.-</ecNumber>
    </recommendedName>
</protein>
<sequence length="364" mass="40528">MSRNLIYRRNRALCFVLILFCFPYRFGARNTPEAEQSTAKATQIIHVSNSTWHDFSRLVDVQIGSHVSGVSELKRYLHRFGYVNDGSEIFSDVFDGPLESAISLYQENLGLPITGRLDTSTVTLMSLPRCGVSDTHMTINNDFLHTTAHYTYFNGKPKWNRDTLTYAISKTHKLDYLTSEDVKTVFRRAFSQWSSVIPVSFEEVDDFTTADLKIGFYAGDHGDGLPFDGVLGTLAHAFAPENGRLHLDAAETWIVDDDLKGSSEVAVDLESVATHEIGHLLGLGHSSQESAVMYPSLRPRTKKVDLTVDDVAGVLKLYGPNPKLRLDSLTQSEDSIKNGTVSHRFLSGNFIGYVLLVVGLILFL</sequence>
<gene>
    <name evidence="9" type="primary">1MMP</name>
    <name evidence="11" type="ordered locus">At4g16640</name>
    <name evidence="12" type="ORF">dl4345c</name>
</gene>
<organism evidence="13">
    <name type="scientific">Arabidopsis thaliana</name>
    <name type="common">Mouse-ear cress</name>
    <dbReference type="NCBI Taxonomy" id="3702"/>
    <lineage>
        <taxon>Eukaryota</taxon>
        <taxon>Viridiplantae</taxon>
        <taxon>Streptophyta</taxon>
        <taxon>Embryophyta</taxon>
        <taxon>Tracheophyta</taxon>
        <taxon>Spermatophyta</taxon>
        <taxon>Magnoliopsida</taxon>
        <taxon>eudicotyledons</taxon>
        <taxon>Gunneridae</taxon>
        <taxon>Pentapetalae</taxon>
        <taxon>rosids</taxon>
        <taxon>malvids</taxon>
        <taxon>Brassicales</taxon>
        <taxon>Brassicaceae</taxon>
        <taxon>Camelineae</taxon>
        <taxon>Arabidopsis</taxon>
    </lineage>
</organism>
<proteinExistence type="evidence at protein level"/>
<feature type="signal peptide" evidence="4">
    <location>
        <begin position="1"/>
        <end position="28"/>
    </location>
</feature>
<feature type="propeptide" id="PRO_0000433519" description="Activation peptide" evidence="3">
    <location>
        <begin position="29"/>
        <end position="149"/>
    </location>
</feature>
<feature type="chain" id="PRO_0000433520" description="Metalloendoproteinase 1-MMP" evidence="4">
    <location>
        <begin position="150"/>
        <end position="339"/>
    </location>
</feature>
<feature type="propeptide" id="PRO_0000433521" description="Removed in mature form" evidence="4">
    <location>
        <begin position="340"/>
        <end position="364"/>
    </location>
</feature>
<feature type="short sequence motif" description="Cysteine switch" evidence="1">
    <location>
        <begin position="128"/>
        <end position="135"/>
    </location>
</feature>
<feature type="active site" evidence="6">
    <location>
        <position position="276"/>
    </location>
</feature>
<feature type="binding site" description="in inhibited form" evidence="2">
    <location>
        <position position="130"/>
    </location>
    <ligand>
        <name>Zn(2+)</name>
        <dbReference type="ChEBI" id="CHEBI:29105"/>
        <label>2</label>
        <note>catalytic</note>
    </ligand>
</feature>
<feature type="binding site" evidence="2">
    <location>
        <position position="211"/>
    </location>
    <ligand>
        <name>Ca(2+)</name>
        <dbReference type="ChEBI" id="CHEBI:29108"/>
        <label>2</label>
    </ligand>
</feature>
<feature type="binding site" evidence="2">
    <location>
        <position position="221"/>
    </location>
    <ligand>
        <name>Zn(2+)</name>
        <dbReference type="ChEBI" id="CHEBI:29105"/>
        <label>1</label>
    </ligand>
</feature>
<feature type="binding site" evidence="2">
    <location>
        <position position="223"/>
    </location>
    <ligand>
        <name>Zn(2+)</name>
        <dbReference type="ChEBI" id="CHEBI:29105"/>
        <label>1</label>
    </ligand>
</feature>
<feature type="binding site" evidence="2">
    <location>
        <position position="228"/>
    </location>
    <ligand>
        <name>Ca(2+)</name>
        <dbReference type="ChEBI" id="CHEBI:29108"/>
        <label>1</label>
    </ligand>
</feature>
<feature type="binding site" evidence="2">
    <location>
        <position position="229"/>
    </location>
    <ligand>
        <name>Ca(2+)</name>
        <dbReference type="ChEBI" id="CHEBI:29108"/>
        <label>1</label>
    </ligand>
</feature>
<feature type="binding site" evidence="2">
    <location>
        <position position="236"/>
    </location>
    <ligand>
        <name>Zn(2+)</name>
        <dbReference type="ChEBI" id="CHEBI:29105"/>
        <label>1</label>
    </ligand>
</feature>
<feature type="binding site" evidence="2">
    <location>
        <position position="243"/>
    </location>
    <ligand>
        <name>Ca(2+)</name>
        <dbReference type="ChEBI" id="CHEBI:29108"/>
        <label>2</label>
    </ligand>
</feature>
<feature type="binding site" evidence="2">
    <location>
        <position position="246"/>
    </location>
    <ligand>
        <name>Zn(2+)</name>
        <dbReference type="ChEBI" id="CHEBI:29105"/>
        <label>1</label>
    </ligand>
</feature>
<feature type="binding site" evidence="2">
    <location>
        <position position="248"/>
    </location>
    <ligand>
        <name>Ca(2+)</name>
        <dbReference type="ChEBI" id="CHEBI:29108"/>
        <label>1</label>
    </ligand>
</feature>
<feature type="binding site" evidence="2">
    <location>
        <position position="251"/>
    </location>
    <ligand>
        <name>Ca(2+)</name>
        <dbReference type="ChEBI" id="CHEBI:29108"/>
        <label>1</label>
    </ligand>
</feature>
<feature type="binding site" evidence="2 6">
    <location>
        <position position="275"/>
    </location>
    <ligand>
        <name>Zn(2+)</name>
        <dbReference type="ChEBI" id="CHEBI:29105"/>
        <label>2</label>
        <note>catalytic</note>
    </ligand>
</feature>
<feature type="binding site" evidence="2 6">
    <location>
        <position position="279"/>
    </location>
    <ligand>
        <name>Zn(2+)</name>
        <dbReference type="ChEBI" id="CHEBI:29105"/>
        <label>2</label>
        <note>catalytic</note>
    </ligand>
</feature>
<feature type="binding site" evidence="2 6">
    <location>
        <position position="285"/>
    </location>
    <ligand>
        <name>Zn(2+)</name>
        <dbReference type="ChEBI" id="CHEBI:29105"/>
        <label>2</label>
        <note>catalytic</note>
    </ligand>
</feature>
<feature type="lipid moiety-binding region" description="GPI-anchor amidated glycine" evidence="4">
    <location>
        <position position="339"/>
    </location>
</feature>
<feature type="glycosylation site" description="N-linked (GlcNAc...) asparagine" evidence="5">
    <location>
        <position position="49"/>
    </location>
</feature>
<feature type="glycosylation site" description="N-linked (GlcNAc...) asparagine" evidence="5">
    <location>
        <position position="338"/>
    </location>
</feature>
<feature type="sequence conflict" description="In Ref. 4; AAO42162." evidence="10" ref="4">
    <original>N</original>
    <variation>I</variation>
    <location>
        <position position="30"/>
    </location>
</feature>
<feature type="sequence conflict" description="In Ref. 5; AAM62476." evidence="10" ref="5">
    <original>N</original>
    <variation>K</variation>
    <location>
        <position position="84"/>
    </location>
</feature>
<name>1MMP_ARATH</name>
<comment type="function">
    <text evidence="7 8 9">Matrix metalloproteinases (MMPs) or matrixins may play a role in the degradation and remodeling of the extracellular matrix (ECM) during development or in response to stresses (PubMed:10574937). Can cleave myelin basic protein as well as fluorigenic peptide substrates, McaPLANvaDpaAR-NH(2) and McaPChaGNvaHADpa-NH(2) 4-fold more efficiently than McaPLGLDpaAR-NH(2) (QF24) (PubMed:10574937). Active on myelin basic protein (MBP) and, to some extent, on McaPLGLDpaAR-NH(2) (QF24) and beta-casein (PubMed:24156403).</text>
</comment>
<comment type="cofactor">
    <cofactor evidence="2">
        <name>Ca(2+)</name>
        <dbReference type="ChEBI" id="CHEBI:29108"/>
    </cofactor>
</comment>
<comment type="cofactor">
    <cofactor evidence="2">
        <name>Zn(2+)</name>
        <dbReference type="ChEBI" id="CHEBI:29105"/>
    </cofactor>
    <text evidence="2">Binds 2 Zn(2+) ions per subunit.</text>
</comment>
<comment type="activity regulation">
    <text evidence="7 8">Inhibited by human TIMP-1 and TIMP-2 and by the peptide hydroxamate inhibitor (BB-94) (PubMed:10574937). Repressed by acetohydroxamic acid (AHA) (PubMed:24156403).</text>
</comment>
<comment type="biophysicochemical properties">
    <phDependence>
        <text evidence="8">Optimum pH is 7-8.</text>
    </phDependence>
    <temperatureDependence>
        <text evidence="8">Optimum temperature is 45-55 degrees Celsius.</text>
    </temperatureDependence>
</comment>
<comment type="subcellular location">
    <subcellularLocation>
        <location evidence="4">Cell membrane</location>
        <topology evidence="4">Lipid-anchor</topology>
        <topology evidence="4">GPI-anchor</topology>
        <orientation evidence="10">Extracellular side</orientation>
    </subcellularLocation>
</comment>
<comment type="tissue specificity">
    <text evidence="7">Mostly expressed in flowers, roots and stems, and, to a lower extent, in leaves.</text>
</comment>
<comment type="domain">
    <text evidence="3">The conserved cysteine present in the cysteine-switch motif binds the catalytic zinc ion, thus inhibiting the enzyme. The dissociation of the cysteine from the zinc ion upon the activation-peptide release activates the enzyme.</text>
</comment>
<comment type="similarity">
    <text evidence="10">Belongs to the peptidase M10A family. Matrix metalloproteinases (MMPs) subfamily.</text>
</comment>